<evidence type="ECO:0000250" key="1"/>
<evidence type="ECO:0000255" key="2">
    <source>
        <dbReference type="HAMAP-Rule" id="MF_01129"/>
    </source>
</evidence>
<reference key="1">
    <citation type="journal article" date="2001" name="Proc. Natl. Acad. Sci. U.S.A.">
        <title>Complete genome sequence of Caulobacter crescentus.</title>
        <authorList>
            <person name="Nierman W.C."/>
            <person name="Feldblyum T.V."/>
            <person name="Laub M.T."/>
            <person name="Paulsen I.T."/>
            <person name="Nelson K.E."/>
            <person name="Eisen J.A."/>
            <person name="Heidelberg J.F."/>
            <person name="Alley M.R.K."/>
            <person name="Ohta N."/>
            <person name="Maddock J.R."/>
            <person name="Potocka I."/>
            <person name="Nelson W.C."/>
            <person name="Newton A."/>
            <person name="Stephens C."/>
            <person name="Phadke N.D."/>
            <person name="Ely B."/>
            <person name="DeBoy R.T."/>
            <person name="Dodson R.J."/>
            <person name="Durkin A.S."/>
            <person name="Gwinn M.L."/>
            <person name="Haft D.H."/>
            <person name="Kolonay J.F."/>
            <person name="Smit J."/>
            <person name="Craven M.B."/>
            <person name="Khouri H.M."/>
            <person name="Shetty J."/>
            <person name="Berry K.J."/>
            <person name="Utterback T.R."/>
            <person name="Tran K."/>
            <person name="Wolf A.M."/>
            <person name="Vamathevan J.J."/>
            <person name="Ermolaeva M.D."/>
            <person name="White O."/>
            <person name="Salzberg S.L."/>
            <person name="Venter J.C."/>
            <person name="Shapiro L."/>
            <person name="Fraser C.M."/>
        </authorList>
    </citation>
    <scope>NUCLEOTIDE SEQUENCE [LARGE SCALE GENOMIC DNA]</scope>
    <source>
        <strain>ATCC 19089 / CIP 103742 / CB 15</strain>
    </source>
</reference>
<protein>
    <recommendedName>
        <fullName evidence="2">K(+)-insensitive pyrophosphate-energized proton pump</fullName>
        <ecNumber evidence="2">7.1.3.1</ecNumber>
    </recommendedName>
    <alternativeName>
        <fullName evidence="2">Membrane-bound proton-translocating pyrophosphatase</fullName>
    </alternativeName>
    <alternativeName>
        <fullName evidence="2">Pyrophosphate-energized inorganic pyrophosphatase</fullName>
        <shortName evidence="2">H(+)-PPase</shortName>
    </alternativeName>
</protein>
<feature type="chain" id="PRO_0000217013" description="K(+)-insensitive pyrophosphate-energized proton pump">
    <location>
        <begin position="1"/>
        <end position="712"/>
    </location>
</feature>
<feature type="transmembrane region" description="Helical" evidence="2">
    <location>
        <begin position="1"/>
        <end position="21"/>
    </location>
</feature>
<feature type="transmembrane region" description="Helical" evidence="2">
    <location>
        <begin position="56"/>
        <end position="76"/>
    </location>
</feature>
<feature type="transmembrane region" description="Helical" evidence="2">
    <location>
        <begin position="79"/>
        <end position="99"/>
    </location>
</feature>
<feature type="transmembrane region" description="Helical" evidence="2">
    <location>
        <begin position="130"/>
        <end position="150"/>
    </location>
</feature>
<feature type="transmembrane region" description="Helical" evidence="2">
    <location>
        <begin position="165"/>
        <end position="185"/>
    </location>
</feature>
<feature type="transmembrane region" description="Helical" evidence="2">
    <location>
        <begin position="231"/>
        <end position="251"/>
    </location>
</feature>
<feature type="transmembrane region" description="Helical" evidence="2">
    <location>
        <begin position="262"/>
        <end position="282"/>
    </location>
</feature>
<feature type="transmembrane region" description="Helical" evidence="2">
    <location>
        <begin position="293"/>
        <end position="313"/>
    </location>
</feature>
<feature type="transmembrane region" description="Helical" evidence="2">
    <location>
        <begin position="330"/>
        <end position="350"/>
    </location>
</feature>
<feature type="transmembrane region" description="Helical" evidence="2">
    <location>
        <begin position="393"/>
        <end position="413"/>
    </location>
</feature>
<feature type="transmembrane region" description="Helical" evidence="2">
    <location>
        <begin position="414"/>
        <end position="434"/>
    </location>
</feature>
<feature type="transmembrane region" description="Helical" evidence="2">
    <location>
        <begin position="467"/>
        <end position="487"/>
    </location>
</feature>
<feature type="transmembrane region" description="Helical" evidence="2">
    <location>
        <begin position="519"/>
        <end position="539"/>
    </location>
</feature>
<feature type="transmembrane region" description="Helical" evidence="2">
    <location>
        <begin position="588"/>
        <end position="608"/>
    </location>
</feature>
<feature type="transmembrane region" description="Helical" evidence="2">
    <location>
        <begin position="614"/>
        <end position="634"/>
    </location>
</feature>
<feature type="binding site" evidence="1">
    <location>
        <position position="187"/>
    </location>
    <ligand>
        <name>substrate</name>
    </ligand>
</feature>
<feature type="binding site" evidence="1">
    <location>
        <position position="190"/>
    </location>
    <ligand>
        <name>Mg(2+)</name>
        <dbReference type="ChEBI" id="CHEBI:18420"/>
        <label>1</label>
    </ligand>
</feature>
<feature type="binding site" evidence="1">
    <location>
        <position position="194"/>
    </location>
    <ligand>
        <name>Mg(2+)</name>
        <dbReference type="ChEBI" id="CHEBI:18420"/>
        <label>1</label>
    </ligand>
</feature>
<feature type="binding site" evidence="1">
    <location>
        <position position="217"/>
    </location>
    <ligand>
        <name>Mg(2+)</name>
        <dbReference type="ChEBI" id="CHEBI:18420"/>
        <label>2</label>
    </ligand>
</feature>
<feature type="binding site" evidence="1">
    <location>
        <position position="220"/>
    </location>
    <ligand>
        <name>Mg(2+)</name>
        <dbReference type="ChEBI" id="CHEBI:18420"/>
        <label>2</label>
    </ligand>
</feature>
<feature type="binding site" evidence="1">
    <location>
        <position position="436"/>
    </location>
    <ligand>
        <name>Mg(2+)</name>
        <dbReference type="ChEBI" id="CHEBI:18420"/>
        <label>2</label>
    </ligand>
</feature>
<feature type="binding site" evidence="1">
    <location>
        <position position="644"/>
    </location>
    <ligand>
        <name>Ca(2+)</name>
        <dbReference type="ChEBI" id="CHEBI:29108"/>
    </ligand>
</feature>
<feature type="binding site" evidence="1">
    <location>
        <position position="676"/>
    </location>
    <ligand>
        <name>Ca(2+)</name>
        <dbReference type="ChEBI" id="CHEBI:29108"/>
    </ligand>
</feature>
<feature type="binding site" evidence="1">
    <location>
        <position position="680"/>
    </location>
    <ligand>
        <name>Ca(2+)</name>
        <dbReference type="ChEBI" id="CHEBI:29108"/>
    </ligand>
</feature>
<feature type="binding site" evidence="1">
    <location>
        <position position="683"/>
    </location>
    <ligand>
        <name>substrate</name>
    </ligand>
</feature>
<feature type="site" description="Important for ion transport" evidence="1">
    <location>
        <position position="179"/>
    </location>
</feature>
<feature type="site" description="Important for ion transport" evidence="1">
    <location>
        <position position="224"/>
    </location>
</feature>
<feature type="site" description="Important for ion transport" evidence="1">
    <location>
        <position position="231"/>
    </location>
</feature>
<feature type="site" description="Determinant of potassium independence" evidence="2">
    <location>
        <position position="466"/>
    </location>
</feature>
<feature type="site" description="Important for ion transport" evidence="1">
    <location>
        <position position="684"/>
    </location>
</feature>
<feature type="site" description="Important for ion transport" evidence="1">
    <location>
        <position position="695"/>
    </location>
</feature>
<proteinExistence type="inferred from homology"/>
<organism>
    <name type="scientific">Caulobacter vibrioides (strain ATCC 19089 / CIP 103742 / CB 15)</name>
    <name type="common">Caulobacter crescentus</name>
    <dbReference type="NCBI Taxonomy" id="190650"/>
    <lineage>
        <taxon>Bacteria</taxon>
        <taxon>Pseudomonadati</taxon>
        <taxon>Pseudomonadota</taxon>
        <taxon>Alphaproteobacteria</taxon>
        <taxon>Caulobacterales</taxon>
        <taxon>Caulobacteraceae</taxon>
        <taxon>Caulobacter</taxon>
    </lineage>
</organism>
<comment type="function">
    <text evidence="2">Proton pump that utilizes the energy of pyrophosphate hydrolysis as the driving force for proton movement across the membrane. Generates a proton motive force.</text>
</comment>
<comment type="catalytic activity">
    <reaction evidence="2">
        <text>diphosphate + H2O + H(+)(in) = 2 phosphate + 2 H(+)(out)</text>
        <dbReference type="Rhea" id="RHEA:13973"/>
        <dbReference type="ChEBI" id="CHEBI:15377"/>
        <dbReference type="ChEBI" id="CHEBI:15378"/>
        <dbReference type="ChEBI" id="CHEBI:33019"/>
        <dbReference type="ChEBI" id="CHEBI:43474"/>
        <dbReference type="EC" id="7.1.3.1"/>
    </reaction>
</comment>
<comment type="cofactor">
    <cofactor evidence="2">
        <name>Mg(2+)</name>
        <dbReference type="ChEBI" id="CHEBI:18420"/>
    </cofactor>
</comment>
<comment type="subunit">
    <text evidence="2">Homodimer.</text>
</comment>
<comment type="subcellular location">
    <subcellularLocation>
        <location evidence="2">Cell inner membrane</location>
        <topology evidence="2">Multi-pass membrane protein</topology>
    </subcellularLocation>
</comment>
<comment type="similarity">
    <text evidence="2">Belongs to the H(+)-translocating pyrophosphatase (TC 3.A.10) family. K(+)-insensitive subfamily.</text>
</comment>
<sequence length="712" mass="72944">MSLWLYLAIGAGLLAVLYGAVQTASLMRASAGNARMQEIAAAIQEGAQAYLKRQYTTISIVGVVVIAALAFFFKSWEQPVGFALGAILSGAAGFAGMLISVRANVRTAQASSESLAKGLSMAFTSGAVTGMLVAGFALLGVAGYYYVLLATGHEATGRVVIDSLVALGFGASLISIFARLGGGIFTKGADVGGDLVGKVEAGIPEDDPRNAATIADNVGDNVGDCAGMAADLFETYAVTTVATMVLAAIFFRGTEAVSAMMLLPLAICAVCIVTSIIGAFFVRLGKSQNIMGALYQGLIVTGVLSIPAVWYVIHQLVPTAVEVDGRSYGADALFYCGLAGLVVTAAIVMITEYYTGTGFRPVKSVAQASVSGHGTNVIQGLAMSLESTALPALTIIVGIVVTYNLAGLFGIAIATTTMLSLAGFIVALDAFGPVTDNAGGIAEMAGLPPEVRVTTDALDAVGNTTKAVTKGYAIGSAGLGALVLFAAYTEDLKFFSENAAPGSFFHGMGAVTFDLSNPYVVVGLLFGGLLPFLFGGLSMTAVGRAAESVVAEVRRQFRDNPGIMTGEVKPEYGKAVDILTKAAIREMIVPSLLPVVSPVALFFVIQAIAGKVDAFAALGAMLMGVIVTGLFVAISMTSGGGAWDNAKKVIEEGFTDKNGVLHKKGGETHKAAVTGDTVGDPYKDTSGPAVNPMIKITNIVALLLLAVLAHGV</sequence>
<dbReference type="EC" id="7.1.3.1" evidence="2"/>
<dbReference type="EMBL" id="AE005673">
    <property type="protein sequence ID" value="AAK23344.1"/>
    <property type="molecule type" value="Genomic_DNA"/>
</dbReference>
<dbReference type="PIR" id="D87418">
    <property type="entry name" value="D87418"/>
</dbReference>
<dbReference type="RefSeq" id="NP_420176.1">
    <property type="nucleotide sequence ID" value="NC_002696.2"/>
</dbReference>
<dbReference type="RefSeq" id="WP_010919240.1">
    <property type="nucleotide sequence ID" value="NC_002696.2"/>
</dbReference>
<dbReference type="SMR" id="Q9A8J0"/>
<dbReference type="EnsemblBacteria" id="AAK23344">
    <property type="protein sequence ID" value="AAK23344"/>
    <property type="gene ID" value="CC_1363"/>
</dbReference>
<dbReference type="KEGG" id="ccr:CC_1363"/>
<dbReference type="PATRIC" id="fig|190650.5.peg.1393"/>
<dbReference type="eggNOG" id="COG3808">
    <property type="taxonomic scope" value="Bacteria"/>
</dbReference>
<dbReference type="HOGENOM" id="CLU_008743_3_1_5"/>
<dbReference type="BioCyc" id="CAULO:CC1363-MONOMER"/>
<dbReference type="Proteomes" id="UP000001816">
    <property type="component" value="Chromosome"/>
</dbReference>
<dbReference type="GO" id="GO:0005886">
    <property type="term" value="C:plasma membrane"/>
    <property type="evidence" value="ECO:0007669"/>
    <property type="project" value="UniProtKB-SubCell"/>
</dbReference>
<dbReference type="GO" id="GO:0009678">
    <property type="term" value="F:diphosphate hydrolysis-driven proton transmembrane transporter activity"/>
    <property type="evidence" value="ECO:0007669"/>
    <property type="project" value="UniProtKB-UniRule"/>
</dbReference>
<dbReference type="GO" id="GO:0004427">
    <property type="term" value="F:inorganic diphosphate phosphatase activity"/>
    <property type="evidence" value="ECO:0007669"/>
    <property type="project" value="UniProtKB-UniRule"/>
</dbReference>
<dbReference type="GO" id="GO:0000287">
    <property type="term" value="F:magnesium ion binding"/>
    <property type="evidence" value="ECO:0007669"/>
    <property type="project" value="UniProtKB-UniRule"/>
</dbReference>
<dbReference type="HAMAP" id="MF_01129">
    <property type="entry name" value="PPase_energized_pump"/>
    <property type="match status" value="1"/>
</dbReference>
<dbReference type="InterPro" id="IPR004131">
    <property type="entry name" value="PPase-energised_H-pump"/>
</dbReference>
<dbReference type="NCBIfam" id="NF001951">
    <property type="entry name" value="PRK00733.1-2"/>
    <property type="match status" value="1"/>
</dbReference>
<dbReference type="NCBIfam" id="NF001960">
    <property type="entry name" value="PRK00733.3-5"/>
    <property type="match status" value="1"/>
</dbReference>
<dbReference type="NCBIfam" id="TIGR01104">
    <property type="entry name" value="V_PPase"/>
    <property type="match status" value="1"/>
</dbReference>
<dbReference type="PANTHER" id="PTHR31998">
    <property type="entry name" value="K(+)-INSENSITIVE PYROPHOSPHATE-ENERGIZED PROTON PUMP"/>
    <property type="match status" value="1"/>
</dbReference>
<dbReference type="Pfam" id="PF03030">
    <property type="entry name" value="H_PPase"/>
    <property type="match status" value="1"/>
</dbReference>
<dbReference type="PIRSF" id="PIRSF001265">
    <property type="entry name" value="H+-PPase"/>
    <property type="match status" value="1"/>
</dbReference>
<gene>
    <name evidence="2" type="primary">hppA</name>
    <name type="ordered locus">CC_1363</name>
</gene>
<accession>Q9A8J0</accession>
<name>HPPA_CAUVC</name>
<keyword id="KW-0106">Calcium</keyword>
<keyword id="KW-0997">Cell inner membrane</keyword>
<keyword id="KW-1003">Cell membrane</keyword>
<keyword id="KW-0375">Hydrogen ion transport</keyword>
<keyword id="KW-0406">Ion transport</keyword>
<keyword id="KW-0460">Magnesium</keyword>
<keyword id="KW-0472">Membrane</keyword>
<keyword id="KW-0479">Metal-binding</keyword>
<keyword id="KW-1185">Reference proteome</keyword>
<keyword id="KW-1278">Translocase</keyword>
<keyword id="KW-0812">Transmembrane</keyword>
<keyword id="KW-1133">Transmembrane helix</keyword>
<keyword id="KW-0813">Transport</keyword>